<evidence type="ECO:0000255" key="1">
    <source>
        <dbReference type="HAMAP-Rule" id="MF_00195"/>
    </source>
</evidence>
<reference key="1">
    <citation type="journal article" date="2007" name="J. Bacteriol.">
        <title>The complete genome sequence of Campylobacter jejuni strain 81116 (NCTC11828).</title>
        <authorList>
            <person name="Pearson B.M."/>
            <person name="Gaskin D.J.H."/>
            <person name="Segers R.P.A.M."/>
            <person name="Wells J.M."/>
            <person name="Nuijten P.J.M."/>
            <person name="van Vliet A.H.M."/>
        </authorList>
    </citation>
    <scope>NUCLEOTIDE SEQUENCE [LARGE SCALE GENOMIC DNA]</scope>
    <source>
        <strain>81116 / NCTC 11828</strain>
    </source>
</reference>
<sequence>MQSIILIGKPNVGKSSLFNRMARQRIAITSDISGTTRDTNKTQIHIHSKKAMLIDSGGLDESDELFKNVKKNTLKVAKESDIILYLVDGKLAPDDEDRQFFYSLKKLGKPIALVVNKVDNKKDEERAWEFANFGVKEIFNLSVTHNVGLDELYEWLEKFLHEEFLIPDEEENLEDFLEHYEEGKEFQFKEVDQNHIRVGIVGRVNVGKSSLLNALVKQERSVVSSIAGTTIDPVNESVVHKDKVIEFVDTAGIRKRGKIQGLERFALNRTEKILSHSQIALLVLDAHEGFNELDERIAGLVAKHYLGVIIVLNKWDKSEMDFDKTVKELHLDRFKFLAYAPVISVSALSGKRVHVLLDKILQIFENFTQKIQTSKLNTLIENATRSHPLPHDYGKLVKIYYAVQYDLAPPKIALIMNRPKALHFSYKRYLQNQIRKEFNFEGVPLVIASRKKGSKENDES</sequence>
<proteinExistence type="inferred from homology"/>
<name>DER_CAMJ8</name>
<protein>
    <recommendedName>
        <fullName evidence="1">GTPase Der</fullName>
    </recommendedName>
    <alternativeName>
        <fullName evidence="1">GTP-binding protein EngA</fullName>
    </alternativeName>
</protein>
<keyword id="KW-0342">GTP-binding</keyword>
<keyword id="KW-0547">Nucleotide-binding</keyword>
<keyword id="KW-0677">Repeat</keyword>
<keyword id="KW-0690">Ribosome biogenesis</keyword>
<comment type="function">
    <text evidence="1">GTPase that plays an essential role in the late steps of ribosome biogenesis.</text>
</comment>
<comment type="subunit">
    <text evidence="1">Associates with the 50S ribosomal subunit.</text>
</comment>
<comment type="similarity">
    <text evidence="1">Belongs to the TRAFAC class TrmE-Era-EngA-EngB-Septin-like GTPase superfamily. EngA (Der) GTPase family.</text>
</comment>
<dbReference type="EMBL" id="CP000814">
    <property type="protein sequence ID" value="ABV51960.1"/>
    <property type="molecule type" value="Genomic_DNA"/>
</dbReference>
<dbReference type="RefSeq" id="WP_002865894.1">
    <property type="nucleotide sequence ID" value="NC_009839.1"/>
</dbReference>
<dbReference type="SMR" id="A8FKH3"/>
<dbReference type="KEGG" id="cju:C8J_0361"/>
<dbReference type="HOGENOM" id="CLU_016077_6_2_7"/>
<dbReference type="GO" id="GO:0005525">
    <property type="term" value="F:GTP binding"/>
    <property type="evidence" value="ECO:0007669"/>
    <property type="project" value="UniProtKB-UniRule"/>
</dbReference>
<dbReference type="GO" id="GO:0043022">
    <property type="term" value="F:ribosome binding"/>
    <property type="evidence" value="ECO:0007669"/>
    <property type="project" value="TreeGrafter"/>
</dbReference>
<dbReference type="GO" id="GO:0042254">
    <property type="term" value="P:ribosome biogenesis"/>
    <property type="evidence" value="ECO:0007669"/>
    <property type="project" value="UniProtKB-KW"/>
</dbReference>
<dbReference type="CDD" id="cd01894">
    <property type="entry name" value="EngA1"/>
    <property type="match status" value="1"/>
</dbReference>
<dbReference type="CDD" id="cd01895">
    <property type="entry name" value="EngA2"/>
    <property type="match status" value="1"/>
</dbReference>
<dbReference type="FunFam" id="3.30.300.20:FF:000004">
    <property type="entry name" value="GTPase Der"/>
    <property type="match status" value="1"/>
</dbReference>
<dbReference type="Gene3D" id="3.30.300.20">
    <property type="match status" value="1"/>
</dbReference>
<dbReference type="Gene3D" id="3.40.50.300">
    <property type="entry name" value="P-loop containing nucleotide triphosphate hydrolases"/>
    <property type="match status" value="2"/>
</dbReference>
<dbReference type="HAMAP" id="MF_00195">
    <property type="entry name" value="GTPase_Der"/>
    <property type="match status" value="1"/>
</dbReference>
<dbReference type="InterPro" id="IPR031166">
    <property type="entry name" value="G_ENGA"/>
</dbReference>
<dbReference type="InterPro" id="IPR006073">
    <property type="entry name" value="GTP-bd"/>
</dbReference>
<dbReference type="InterPro" id="IPR016484">
    <property type="entry name" value="GTPase_Der"/>
</dbReference>
<dbReference type="InterPro" id="IPR032859">
    <property type="entry name" value="KH_dom-like"/>
</dbReference>
<dbReference type="InterPro" id="IPR015946">
    <property type="entry name" value="KH_dom-like_a/b"/>
</dbReference>
<dbReference type="InterPro" id="IPR027417">
    <property type="entry name" value="P-loop_NTPase"/>
</dbReference>
<dbReference type="InterPro" id="IPR005225">
    <property type="entry name" value="Small_GTP-bd"/>
</dbReference>
<dbReference type="NCBIfam" id="TIGR03594">
    <property type="entry name" value="GTPase_EngA"/>
    <property type="match status" value="1"/>
</dbReference>
<dbReference type="NCBIfam" id="TIGR00231">
    <property type="entry name" value="small_GTP"/>
    <property type="match status" value="2"/>
</dbReference>
<dbReference type="PANTHER" id="PTHR43834">
    <property type="entry name" value="GTPASE DER"/>
    <property type="match status" value="1"/>
</dbReference>
<dbReference type="PANTHER" id="PTHR43834:SF6">
    <property type="entry name" value="GTPASE DER"/>
    <property type="match status" value="1"/>
</dbReference>
<dbReference type="Pfam" id="PF14714">
    <property type="entry name" value="KH_dom-like"/>
    <property type="match status" value="1"/>
</dbReference>
<dbReference type="Pfam" id="PF01926">
    <property type="entry name" value="MMR_HSR1"/>
    <property type="match status" value="2"/>
</dbReference>
<dbReference type="PIRSF" id="PIRSF006485">
    <property type="entry name" value="GTP-binding_EngA"/>
    <property type="match status" value="1"/>
</dbReference>
<dbReference type="PRINTS" id="PR00326">
    <property type="entry name" value="GTP1OBG"/>
</dbReference>
<dbReference type="SUPFAM" id="SSF52540">
    <property type="entry name" value="P-loop containing nucleoside triphosphate hydrolases"/>
    <property type="match status" value="2"/>
</dbReference>
<dbReference type="PROSITE" id="PS51712">
    <property type="entry name" value="G_ENGA"/>
    <property type="match status" value="2"/>
</dbReference>
<accession>A8FKH3</accession>
<gene>
    <name evidence="1" type="primary">der</name>
    <name type="synonym">engA</name>
    <name type="ordered locus">C8J_0361</name>
</gene>
<organism>
    <name type="scientific">Campylobacter jejuni subsp. jejuni serotype O:6 (strain 81116 / NCTC 11828)</name>
    <dbReference type="NCBI Taxonomy" id="407148"/>
    <lineage>
        <taxon>Bacteria</taxon>
        <taxon>Pseudomonadati</taxon>
        <taxon>Campylobacterota</taxon>
        <taxon>Epsilonproteobacteria</taxon>
        <taxon>Campylobacterales</taxon>
        <taxon>Campylobacteraceae</taxon>
        <taxon>Campylobacter</taxon>
    </lineage>
</organism>
<feature type="chain" id="PRO_1000071701" description="GTPase Der">
    <location>
        <begin position="1"/>
        <end position="460"/>
    </location>
</feature>
<feature type="domain" description="EngA-type G 1">
    <location>
        <begin position="2"/>
        <end position="164"/>
    </location>
</feature>
<feature type="domain" description="EngA-type G 2">
    <location>
        <begin position="196"/>
        <end position="368"/>
    </location>
</feature>
<feature type="domain" description="KH-like" evidence="1">
    <location>
        <begin position="369"/>
        <end position="453"/>
    </location>
</feature>
<feature type="binding site" evidence="1">
    <location>
        <begin position="8"/>
        <end position="15"/>
    </location>
    <ligand>
        <name>GTP</name>
        <dbReference type="ChEBI" id="CHEBI:37565"/>
        <label>1</label>
    </ligand>
</feature>
<feature type="binding site" evidence="1">
    <location>
        <begin position="55"/>
        <end position="59"/>
    </location>
    <ligand>
        <name>GTP</name>
        <dbReference type="ChEBI" id="CHEBI:37565"/>
        <label>1</label>
    </ligand>
</feature>
<feature type="binding site" evidence="1">
    <location>
        <begin position="116"/>
        <end position="119"/>
    </location>
    <ligand>
        <name>GTP</name>
        <dbReference type="ChEBI" id="CHEBI:37565"/>
        <label>1</label>
    </ligand>
</feature>
<feature type="binding site" evidence="1">
    <location>
        <begin position="202"/>
        <end position="209"/>
    </location>
    <ligand>
        <name>GTP</name>
        <dbReference type="ChEBI" id="CHEBI:37565"/>
        <label>2</label>
    </ligand>
</feature>
<feature type="binding site" evidence="1">
    <location>
        <begin position="249"/>
        <end position="253"/>
    </location>
    <ligand>
        <name>GTP</name>
        <dbReference type="ChEBI" id="CHEBI:37565"/>
        <label>2</label>
    </ligand>
</feature>
<feature type="binding site" evidence="1">
    <location>
        <begin position="313"/>
        <end position="316"/>
    </location>
    <ligand>
        <name>GTP</name>
        <dbReference type="ChEBI" id="CHEBI:37565"/>
        <label>2</label>
    </ligand>
</feature>